<organism>
    <name type="scientific">Helicobacter pylori (strain J99 / ATCC 700824)</name>
    <name type="common">Campylobacter pylori J99</name>
    <dbReference type="NCBI Taxonomy" id="85963"/>
    <lineage>
        <taxon>Bacteria</taxon>
        <taxon>Pseudomonadati</taxon>
        <taxon>Campylobacterota</taxon>
        <taxon>Epsilonproteobacteria</taxon>
        <taxon>Campylobacterales</taxon>
        <taxon>Helicobacteraceae</taxon>
        <taxon>Helicobacter</taxon>
    </lineage>
</organism>
<dbReference type="EC" id="2.8.1.12"/>
<dbReference type="EMBL" id="AE001439">
    <property type="protein sequence ID" value="AAD06322.1"/>
    <property type="molecule type" value="Genomic_DNA"/>
</dbReference>
<dbReference type="PIR" id="G71893">
    <property type="entry name" value="G71893"/>
</dbReference>
<dbReference type="RefSeq" id="WP_000913141.1">
    <property type="nucleotide sequence ID" value="NC_000921.1"/>
</dbReference>
<dbReference type="SMR" id="Q9ZL44"/>
<dbReference type="KEGG" id="hpj:jhp_0736"/>
<dbReference type="eggNOG" id="COG0314">
    <property type="taxonomic scope" value="Bacteria"/>
</dbReference>
<dbReference type="UniPathway" id="UPA00344"/>
<dbReference type="Proteomes" id="UP000000804">
    <property type="component" value="Chromosome"/>
</dbReference>
<dbReference type="GO" id="GO:0030366">
    <property type="term" value="F:molybdopterin synthase activity"/>
    <property type="evidence" value="ECO:0007669"/>
    <property type="project" value="UniProtKB-EC"/>
</dbReference>
<dbReference type="GO" id="GO:0006777">
    <property type="term" value="P:Mo-molybdopterin cofactor biosynthetic process"/>
    <property type="evidence" value="ECO:0007669"/>
    <property type="project" value="UniProtKB-KW"/>
</dbReference>
<dbReference type="Gene3D" id="3.90.1170.40">
    <property type="entry name" value="Molybdopterin biosynthesis MoaE subunit"/>
    <property type="match status" value="1"/>
</dbReference>
<dbReference type="InterPro" id="IPR036563">
    <property type="entry name" value="MoaE_sf"/>
</dbReference>
<dbReference type="InterPro" id="IPR003448">
    <property type="entry name" value="Mopterin_biosynth_MoaE"/>
</dbReference>
<dbReference type="Pfam" id="PF02391">
    <property type="entry name" value="MoaE"/>
    <property type="match status" value="1"/>
</dbReference>
<dbReference type="SUPFAM" id="SSF54690">
    <property type="entry name" value="Molybdopterin synthase subunit MoaE"/>
    <property type="match status" value="1"/>
</dbReference>
<gene>
    <name type="primary">moaE</name>
    <name type="ordered locus">jhp_0736</name>
</gene>
<proteinExistence type="inferred from homology"/>
<sequence length="145" mass="16683">MLKIVQGALDTDKLLKDYQEEACTKNFGAFCVFVGIVREEGNVQGLSFDIYEALLKTWFEKWRHQPKDLGVVLKMAHSVGDVLIRHSSFLCVLMGANTKNALKLYEYFFKNFKRNAPIWKCYLSDNERIYAKKKDHLLKGSGLLA</sequence>
<accession>Q9ZL44</accession>
<protein>
    <recommendedName>
        <fullName>Molybdopterin synthase catalytic subunit</fullName>
        <ecNumber>2.8.1.12</ecNumber>
    </recommendedName>
    <alternativeName>
        <fullName>MPT synthase subunit 2</fullName>
    </alternativeName>
    <alternativeName>
        <fullName>Molybdenum cofactor biosynthesis protein E</fullName>
    </alternativeName>
    <alternativeName>
        <fullName>Molybdopterin-converting factor large subunit</fullName>
    </alternativeName>
    <alternativeName>
        <fullName>Molybdopterin-converting factor subunit 2</fullName>
    </alternativeName>
</protein>
<reference key="1">
    <citation type="journal article" date="1999" name="Nature">
        <title>Genomic sequence comparison of two unrelated isolates of the human gastric pathogen Helicobacter pylori.</title>
        <authorList>
            <person name="Alm R.A."/>
            <person name="Ling L.-S.L."/>
            <person name="Moir D.T."/>
            <person name="King B.L."/>
            <person name="Brown E.D."/>
            <person name="Doig P.C."/>
            <person name="Smith D.R."/>
            <person name="Noonan B."/>
            <person name="Guild B.C."/>
            <person name="deJonge B.L."/>
            <person name="Carmel G."/>
            <person name="Tummino P.J."/>
            <person name="Caruso A."/>
            <person name="Uria-Nickelsen M."/>
            <person name="Mills D.M."/>
            <person name="Ives C."/>
            <person name="Gibson R."/>
            <person name="Merberg D."/>
            <person name="Mills S.D."/>
            <person name="Jiang Q."/>
            <person name="Taylor D.E."/>
            <person name="Vovis G.F."/>
            <person name="Trust T.J."/>
        </authorList>
    </citation>
    <scope>NUCLEOTIDE SEQUENCE [LARGE SCALE GENOMIC DNA]</scope>
    <source>
        <strain>J99 / ATCC 700824</strain>
    </source>
</reference>
<feature type="chain" id="PRO_0000163085" description="Molybdopterin synthase catalytic subunit">
    <location>
        <begin position="1"/>
        <end position="145"/>
    </location>
</feature>
<feature type="binding site" evidence="1">
    <location>
        <begin position="36"/>
        <end position="38"/>
    </location>
    <ligand>
        <name>substrate</name>
    </ligand>
</feature>
<feature type="binding site" evidence="1">
    <location>
        <begin position="97"/>
        <end position="98"/>
    </location>
    <ligand>
        <name>substrate</name>
    </ligand>
</feature>
<feature type="binding site" evidence="1">
    <location>
        <position position="113"/>
    </location>
    <ligand>
        <name>substrate</name>
    </ligand>
</feature>
<feature type="binding site" evidence="1">
    <location>
        <begin position="120"/>
        <end position="122"/>
    </location>
    <ligand>
        <name>substrate</name>
    </ligand>
</feature>
<keyword id="KW-0501">Molybdenum cofactor biosynthesis</keyword>
<keyword id="KW-0808">Transferase</keyword>
<name>MOAE_HELPJ</name>
<evidence type="ECO:0000250" key="1"/>
<evidence type="ECO:0000305" key="2"/>
<comment type="function">
    <text evidence="1">Converts molybdopterin precursor Z into molybdopterin. This requires the incorporation of two sulfur atoms into precursor Z to generate a dithiolene group. The sulfur is provided by MoaD (By similarity).</text>
</comment>
<comment type="catalytic activity">
    <reaction>
        <text>2 [molybdopterin-synthase sulfur-carrier protein]-C-terminal-Gly-aminoethanethioate + cyclic pyranopterin phosphate + H2O = molybdopterin + 2 [molybdopterin-synthase sulfur-carrier protein]-C-terminal Gly-Gly + 2 H(+)</text>
        <dbReference type="Rhea" id="RHEA:26333"/>
        <dbReference type="Rhea" id="RHEA-COMP:12202"/>
        <dbReference type="Rhea" id="RHEA-COMP:19907"/>
        <dbReference type="ChEBI" id="CHEBI:15377"/>
        <dbReference type="ChEBI" id="CHEBI:15378"/>
        <dbReference type="ChEBI" id="CHEBI:58698"/>
        <dbReference type="ChEBI" id="CHEBI:59648"/>
        <dbReference type="ChEBI" id="CHEBI:90778"/>
        <dbReference type="ChEBI" id="CHEBI:232372"/>
        <dbReference type="EC" id="2.8.1.12"/>
    </reaction>
</comment>
<comment type="pathway">
    <text>Cofactor biosynthesis; molybdopterin biosynthesis.</text>
</comment>
<comment type="subunit">
    <text evidence="1">Heterotetramer of 2 MoaD subunits and 2 MoaE subunits. Also stable as homodimer. The enzyme changes between these two forms during catalysis (By similarity).</text>
</comment>
<comment type="similarity">
    <text evidence="2">Belongs to the MoaE family.</text>
</comment>